<accession>P36771</accession>
<accession>P76490</accession>
<accession>P76934</accession>
<sequence length="312" mass="34594">MISANRPIINLDLDLLRTFVAVADLNTFAAAAAAVCRTQSAVSQQMQRLEQLVGKELFARHGRNKLLTEHGIQLLGYARKILRFNDEACSSLMFSNLQGVLTIGASDESADTILPFLLNRVSSVYPKLALDVRVKRNAYMAEMLESQEVDLMVTTHRPSAFKALNLRTSPTHWYCAAEYILQKGEPIPLVLLDDPSPFRDMVLATLNKADIPWRLAYVASTLPAVRAAVKAGLGVTARPVEMMSPDLRVLSGVDGLPPLPDTEYLLCYDPSSNNELAQVIYQAMESYHNPWQYSPMSAPEGDDSLLIERDIE</sequence>
<protein>
    <recommendedName>
        <fullName>Probable HTH-type transcriptional regulator LrhA</fullName>
    </recommendedName>
</protein>
<feature type="chain" id="PRO_0000105663" description="Probable HTH-type transcriptional regulator LrhA">
    <location>
        <begin position="1"/>
        <end position="312"/>
    </location>
</feature>
<feature type="domain" description="HTH lysR-type" evidence="1">
    <location>
        <begin position="11"/>
        <end position="68"/>
    </location>
</feature>
<feature type="DNA-binding region" description="H-T-H motif" evidence="1">
    <location>
        <begin position="28"/>
        <end position="47"/>
    </location>
</feature>
<feature type="sequence conflict" description="In Ref. 1; CAA52637." evidence="2" ref="1">
    <original>WQYSPMSAPEGDDSLLIERDIE</original>
    <variation>CNTAQCLLRKGMIH</variation>
    <location>
        <begin position="291"/>
        <end position="312"/>
    </location>
</feature>
<feature type="strand" evidence="3">
    <location>
        <begin position="100"/>
        <end position="106"/>
    </location>
</feature>
<feature type="helix" evidence="3">
    <location>
        <begin position="107"/>
        <end position="110"/>
    </location>
</feature>
<feature type="turn" evidence="3">
    <location>
        <begin position="111"/>
        <end position="113"/>
    </location>
</feature>
<feature type="helix" evidence="3">
    <location>
        <begin position="114"/>
        <end position="124"/>
    </location>
</feature>
<feature type="strand" evidence="3">
    <location>
        <begin position="128"/>
        <end position="135"/>
    </location>
</feature>
<feature type="helix" evidence="3">
    <location>
        <begin position="140"/>
        <end position="145"/>
    </location>
</feature>
<feature type="strand" evidence="3">
    <location>
        <begin position="150"/>
        <end position="156"/>
    </location>
</feature>
<feature type="strand" evidence="3">
    <location>
        <begin position="159"/>
        <end position="169"/>
    </location>
</feature>
<feature type="strand" evidence="3">
    <location>
        <begin position="171"/>
        <end position="176"/>
    </location>
</feature>
<feature type="strand" evidence="3">
    <location>
        <begin position="183"/>
        <end position="185"/>
    </location>
</feature>
<feature type="strand" evidence="3">
    <location>
        <begin position="187"/>
        <end position="194"/>
    </location>
</feature>
<feature type="helix" evidence="3">
    <location>
        <begin position="197"/>
        <end position="208"/>
    </location>
</feature>
<feature type="strand" evidence="3">
    <location>
        <begin position="213"/>
        <end position="221"/>
    </location>
</feature>
<feature type="helix" evidence="3">
    <location>
        <begin position="222"/>
        <end position="230"/>
    </location>
</feature>
<feature type="strand" evidence="3">
    <location>
        <begin position="233"/>
        <end position="239"/>
    </location>
</feature>
<feature type="helix" evidence="3">
    <location>
        <begin position="240"/>
        <end position="242"/>
    </location>
</feature>
<feature type="strand" evidence="3">
    <location>
        <begin position="247"/>
        <end position="250"/>
    </location>
</feature>
<feature type="helix" evidence="3">
    <location>
        <begin position="252"/>
        <end position="254"/>
    </location>
</feature>
<feature type="strand" evidence="3">
    <location>
        <begin position="262"/>
        <end position="268"/>
    </location>
</feature>
<feature type="helix" evidence="3">
    <location>
        <begin position="275"/>
        <end position="286"/>
    </location>
</feature>
<keyword id="KW-0002">3D-structure</keyword>
<keyword id="KW-0238">DNA-binding</keyword>
<keyword id="KW-1185">Reference proteome</keyword>
<keyword id="KW-0804">Transcription</keyword>
<keyword id="KW-0805">Transcription regulation</keyword>
<organism>
    <name type="scientific">Escherichia coli (strain K12)</name>
    <dbReference type="NCBI Taxonomy" id="83333"/>
    <lineage>
        <taxon>Bacteria</taxon>
        <taxon>Pseudomonadati</taxon>
        <taxon>Pseudomonadota</taxon>
        <taxon>Gammaproteobacteria</taxon>
        <taxon>Enterobacterales</taxon>
        <taxon>Enterobacteriaceae</taxon>
        <taxon>Escherichia</taxon>
    </lineage>
</organism>
<dbReference type="EMBL" id="X74546">
    <property type="protein sequence ID" value="CAA52637.1"/>
    <property type="molecule type" value="Genomic_DNA"/>
</dbReference>
<dbReference type="EMBL" id="U00096">
    <property type="protein sequence ID" value="AAC75349.1"/>
    <property type="molecule type" value="Genomic_DNA"/>
</dbReference>
<dbReference type="EMBL" id="AP009048">
    <property type="protein sequence ID" value="BAA16124.2"/>
    <property type="molecule type" value="Genomic_DNA"/>
</dbReference>
<dbReference type="PIR" id="G65000">
    <property type="entry name" value="G65000"/>
</dbReference>
<dbReference type="RefSeq" id="NP_416792.1">
    <property type="nucleotide sequence ID" value="NC_000913.3"/>
</dbReference>
<dbReference type="RefSeq" id="WP_000622280.1">
    <property type="nucleotide sequence ID" value="NZ_LN832404.1"/>
</dbReference>
<dbReference type="PDB" id="7YHJ">
    <property type="method" value="X-ray"/>
    <property type="resolution" value="3.24 A"/>
    <property type="chains" value="A/B/C/D/E/F/G/H=1-312"/>
</dbReference>
<dbReference type="PDBsum" id="7YHJ"/>
<dbReference type="SMR" id="P36771"/>
<dbReference type="BioGRID" id="4262973">
    <property type="interactions" value="113"/>
</dbReference>
<dbReference type="BioGRID" id="851110">
    <property type="interactions" value="1"/>
</dbReference>
<dbReference type="FunCoup" id="P36771">
    <property type="interactions" value="107"/>
</dbReference>
<dbReference type="IntAct" id="P36771">
    <property type="interactions" value="1"/>
</dbReference>
<dbReference type="STRING" id="511145.b2289"/>
<dbReference type="jPOST" id="P36771"/>
<dbReference type="PaxDb" id="511145-b2289"/>
<dbReference type="EnsemblBacteria" id="AAC75349">
    <property type="protein sequence ID" value="AAC75349"/>
    <property type="gene ID" value="b2289"/>
</dbReference>
<dbReference type="GeneID" id="75205665"/>
<dbReference type="GeneID" id="946769"/>
<dbReference type="KEGG" id="ecj:JW2284"/>
<dbReference type="KEGG" id="eco:b2289"/>
<dbReference type="KEGG" id="ecoc:C3026_12770"/>
<dbReference type="PATRIC" id="fig|1411691.4.peg.4446"/>
<dbReference type="EchoBASE" id="EB2044"/>
<dbReference type="eggNOG" id="COG0583">
    <property type="taxonomic scope" value="Bacteria"/>
</dbReference>
<dbReference type="HOGENOM" id="CLU_039613_1_3_6"/>
<dbReference type="InParanoid" id="P36771"/>
<dbReference type="OMA" id="RTWRITC"/>
<dbReference type="OrthoDB" id="5723059at2"/>
<dbReference type="PhylomeDB" id="P36771"/>
<dbReference type="BioCyc" id="EcoCyc:EG12123-MONOMER"/>
<dbReference type="PHI-base" id="PHI:7647"/>
<dbReference type="PRO" id="PR:P36771"/>
<dbReference type="Proteomes" id="UP000000625">
    <property type="component" value="Chromosome"/>
</dbReference>
<dbReference type="GO" id="GO:0000987">
    <property type="term" value="F:cis-regulatory region sequence-specific DNA binding"/>
    <property type="evidence" value="ECO:0000314"/>
    <property type="project" value="EcoCyc"/>
</dbReference>
<dbReference type="GO" id="GO:0003700">
    <property type="term" value="F:DNA-binding transcription factor activity"/>
    <property type="evidence" value="ECO:0000318"/>
    <property type="project" value="GO_Central"/>
</dbReference>
<dbReference type="GO" id="GO:0043565">
    <property type="term" value="F:sequence-specific DNA binding"/>
    <property type="evidence" value="ECO:0000314"/>
    <property type="project" value="EcoliWiki"/>
</dbReference>
<dbReference type="GO" id="GO:0006351">
    <property type="term" value="P:DNA-templated transcription"/>
    <property type="evidence" value="ECO:0000314"/>
    <property type="project" value="EcoCyc"/>
</dbReference>
<dbReference type="GO" id="GO:0045892">
    <property type="term" value="P:negative regulation of DNA-templated transcription"/>
    <property type="evidence" value="ECO:0000315"/>
    <property type="project" value="EcoCyc"/>
</dbReference>
<dbReference type="GO" id="GO:0045893">
    <property type="term" value="P:positive regulation of DNA-templated transcription"/>
    <property type="evidence" value="ECO:0000270"/>
    <property type="project" value="EcoCyc"/>
</dbReference>
<dbReference type="GO" id="GO:0006355">
    <property type="term" value="P:regulation of DNA-templated transcription"/>
    <property type="evidence" value="ECO:0000318"/>
    <property type="project" value="GO_Central"/>
</dbReference>
<dbReference type="CDD" id="cd08439">
    <property type="entry name" value="PBP2_LrhA_like"/>
    <property type="match status" value="1"/>
</dbReference>
<dbReference type="FunFam" id="1.10.10.10:FF:000112">
    <property type="entry name" value="HTH-type transcriptional regulator lrhA"/>
    <property type="match status" value="1"/>
</dbReference>
<dbReference type="FunFam" id="3.40.190.10:FF:000069">
    <property type="entry name" value="HTH-type transcriptional regulator lrhA"/>
    <property type="match status" value="1"/>
</dbReference>
<dbReference type="FunFam" id="3.40.190.10:FF:000042">
    <property type="entry name" value="LysR family transcriptional regulator"/>
    <property type="match status" value="1"/>
</dbReference>
<dbReference type="Gene3D" id="3.40.190.10">
    <property type="entry name" value="Periplasmic binding protein-like II"/>
    <property type="match status" value="2"/>
</dbReference>
<dbReference type="Gene3D" id="1.10.10.10">
    <property type="entry name" value="Winged helix-like DNA-binding domain superfamily/Winged helix DNA-binding domain"/>
    <property type="match status" value="1"/>
</dbReference>
<dbReference type="InterPro" id="IPR050176">
    <property type="entry name" value="LTTR"/>
</dbReference>
<dbReference type="InterPro" id="IPR005119">
    <property type="entry name" value="LysR_subst-bd"/>
</dbReference>
<dbReference type="InterPro" id="IPR000847">
    <property type="entry name" value="Tscrpt_reg_HTH_LysR"/>
</dbReference>
<dbReference type="InterPro" id="IPR036388">
    <property type="entry name" value="WH-like_DNA-bd_sf"/>
</dbReference>
<dbReference type="InterPro" id="IPR036390">
    <property type="entry name" value="WH_DNA-bd_sf"/>
</dbReference>
<dbReference type="NCBIfam" id="NF011673">
    <property type="entry name" value="PRK15092.1"/>
    <property type="match status" value="1"/>
</dbReference>
<dbReference type="PANTHER" id="PTHR30579:SF7">
    <property type="entry name" value="HTH-TYPE TRANSCRIPTIONAL REGULATOR LRHA-RELATED"/>
    <property type="match status" value="1"/>
</dbReference>
<dbReference type="PANTHER" id="PTHR30579">
    <property type="entry name" value="TRANSCRIPTIONAL REGULATOR"/>
    <property type="match status" value="1"/>
</dbReference>
<dbReference type="Pfam" id="PF00126">
    <property type="entry name" value="HTH_1"/>
    <property type="match status" value="1"/>
</dbReference>
<dbReference type="Pfam" id="PF03466">
    <property type="entry name" value="LysR_substrate"/>
    <property type="match status" value="1"/>
</dbReference>
<dbReference type="PRINTS" id="PR00039">
    <property type="entry name" value="HTHLYSR"/>
</dbReference>
<dbReference type="SUPFAM" id="SSF53850">
    <property type="entry name" value="Periplasmic binding protein-like II"/>
    <property type="match status" value="1"/>
</dbReference>
<dbReference type="SUPFAM" id="SSF46785">
    <property type="entry name" value="Winged helix' DNA-binding domain"/>
    <property type="match status" value="1"/>
</dbReference>
<dbReference type="PROSITE" id="PS50931">
    <property type="entry name" value="HTH_LYSR"/>
    <property type="match status" value="1"/>
</dbReference>
<name>LRHA_ECOLI</name>
<evidence type="ECO:0000255" key="1">
    <source>
        <dbReference type="PROSITE-ProRule" id="PRU00253"/>
    </source>
</evidence>
<evidence type="ECO:0000305" key="2"/>
<evidence type="ECO:0007829" key="3">
    <source>
        <dbReference type="PDB" id="7YHJ"/>
    </source>
</evidence>
<gene>
    <name type="primary">lrhA</name>
    <name type="synonym">genR</name>
    <name type="ordered locus">b2289</name>
    <name type="ordered locus">JW2284</name>
</gene>
<reference key="1">
    <citation type="journal article" date="1995" name="Mol. Microbiol.">
        <title>Transcriptional regulation of the proton translocating NADH dehydrogenase genes (nuoA-N) of Escherichia coli by electron acceptors, electron donors and gene regulators.</title>
        <authorList>
            <person name="Bongaerts J."/>
            <person name="Zoske S."/>
            <person name="Weidner U."/>
            <person name="Unden G."/>
        </authorList>
    </citation>
    <scope>NUCLEOTIDE SEQUENCE [GENOMIC DNA]</scope>
    <source>
        <strain>K12 / W3110 / ATCC 27325 / DSM 5911</strain>
    </source>
</reference>
<reference key="2">
    <citation type="journal article" date="1997" name="DNA Res.">
        <title>Construction of a contiguous 874-kb sequence of the Escherichia coli-K12 genome corresponding to 50.0-68.8 min on the linkage map and analysis of its sequence features.</title>
        <authorList>
            <person name="Yamamoto Y."/>
            <person name="Aiba H."/>
            <person name="Baba T."/>
            <person name="Hayashi K."/>
            <person name="Inada T."/>
            <person name="Isono K."/>
            <person name="Itoh T."/>
            <person name="Kimura S."/>
            <person name="Kitagawa M."/>
            <person name="Makino K."/>
            <person name="Miki T."/>
            <person name="Mitsuhashi N."/>
            <person name="Mizobuchi K."/>
            <person name="Mori H."/>
            <person name="Nakade S."/>
            <person name="Nakamura Y."/>
            <person name="Nashimoto H."/>
            <person name="Oshima T."/>
            <person name="Oyama S."/>
            <person name="Saito N."/>
            <person name="Sampei G."/>
            <person name="Satoh Y."/>
            <person name="Sivasundaram S."/>
            <person name="Tagami H."/>
            <person name="Takahashi H."/>
            <person name="Takeda J."/>
            <person name="Takemoto K."/>
            <person name="Uehara K."/>
            <person name="Wada C."/>
            <person name="Yamagata S."/>
            <person name="Horiuchi T."/>
        </authorList>
    </citation>
    <scope>NUCLEOTIDE SEQUENCE [LARGE SCALE GENOMIC DNA]</scope>
    <source>
        <strain>K12 / W3110 / ATCC 27325 / DSM 5911</strain>
    </source>
</reference>
<reference key="3">
    <citation type="journal article" date="1997" name="Science">
        <title>The complete genome sequence of Escherichia coli K-12.</title>
        <authorList>
            <person name="Blattner F.R."/>
            <person name="Plunkett G. III"/>
            <person name="Bloch C.A."/>
            <person name="Perna N.T."/>
            <person name="Burland V."/>
            <person name="Riley M."/>
            <person name="Collado-Vides J."/>
            <person name="Glasner J.D."/>
            <person name="Rode C.K."/>
            <person name="Mayhew G.F."/>
            <person name="Gregor J."/>
            <person name="Davis N.W."/>
            <person name="Kirkpatrick H.A."/>
            <person name="Goeden M.A."/>
            <person name="Rose D.J."/>
            <person name="Mau B."/>
            <person name="Shao Y."/>
        </authorList>
    </citation>
    <scope>NUCLEOTIDE SEQUENCE [LARGE SCALE GENOMIC DNA]</scope>
    <source>
        <strain>K12 / MG1655 / ATCC 47076</strain>
    </source>
</reference>
<reference key="4">
    <citation type="journal article" date="2006" name="Mol. Syst. Biol.">
        <title>Highly accurate genome sequences of Escherichia coli K-12 strains MG1655 and W3110.</title>
        <authorList>
            <person name="Hayashi K."/>
            <person name="Morooka N."/>
            <person name="Yamamoto Y."/>
            <person name="Fujita K."/>
            <person name="Isono K."/>
            <person name="Choi S."/>
            <person name="Ohtsubo E."/>
            <person name="Baba T."/>
            <person name="Wanner B.L."/>
            <person name="Mori H."/>
            <person name="Horiuchi T."/>
        </authorList>
    </citation>
    <scope>NUCLEOTIDE SEQUENCE [LARGE SCALE GENOMIC DNA]</scope>
    <source>
        <strain>K12 / W3110 / ATCC 27325 / DSM 5911</strain>
    </source>
</reference>
<proteinExistence type="evidence at protein level"/>
<comment type="function">
    <text>Not known, does not seem to act on the proton translocating NADH dehydrogenase genes (nuoA-N) which are part of the lrhA operon.</text>
</comment>
<comment type="similarity">
    <text evidence="2">Belongs to the LysR transcriptional regulatory family.</text>
</comment>